<proteinExistence type="inferred from homology"/>
<comment type="function">
    <text evidence="1">Involved in allosteric regulation of aspartate carbamoyltransferase.</text>
</comment>
<comment type="cofactor">
    <cofactor evidence="1">
        <name>Zn(2+)</name>
        <dbReference type="ChEBI" id="CHEBI:29105"/>
    </cofactor>
    <text evidence="1">Binds 1 zinc ion per subunit.</text>
</comment>
<comment type="subunit">
    <text evidence="1">Contains catalytic and regulatory chains.</text>
</comment>
<comment type="similarity">
    <text evidence="1">Belongs to the PyrI family.</text>
</comment>
<gene>
    <name evidence="1" type="primary">pyrI</name>
    <name type="ordered locus">PGN_1603</name>
</gene>
<evidence type="ECO:0000255" key="1">
    <source>
        <dbReference type="HAMAP-Rule" id="MF_00002"/>
    </source>
</evidence>
<protein>
    <recommendedName>
        <fullName evidence="1">Aspartate carbamoyltransferase regulatory chain</fullName>
    </recommendedName>
</protein>
<organism>
    <name type="scientific">Porphyromonas gingivalis (strain ATCC 33277 / DSM 20709 / CIP 103683 / JCM 12257 / NCTC 11834 / 2561)</name>
    <dbReference type="NCBI Taxonomy" id="431947"/>
    <lineage>
        <taxon>Bacteria</taxon>
        <taxon>Pseudomonadati</taxon>
        <taxon>Bacteroidota</taxon>
        <taxon>Bacteroidia</taxon>
        <taxon>Bacteroidales</taxon>
        <taxon>Porphyromonadaceae</taxon>
        <taxon>Porphyromonas</taxon>
    </lineage>
</organism>
<keyword id="KW-0479">Metal-binding</keyword>
<keyword id="KW-0665">Pyrimidine biosynthesis</keyword>
<keyword id="KW-0862">Zinc</keyword>
<reference key="1">
    <citation type="journal article" date="2008" name="DNA Res.">
        <title>Determination of the genome sequence of Porphyromonas gingivalis strain ATCC 33277 and genomic comparison with strain W83 revealed extensive genome rearrangements in P. gingivalis.</title>
        <authorList>
            <person name="Naito M."/>
            <person name="Hirakawa H."/>
            <person name="Yamashita A."/>
            <person name="Ohara N."/>
            <person name="Shoji M."/>
            <person name="Yukitake H."/>
            <person name="Nakayama K."/>
            <person name="Toh H."/>
            <person name="Yoshimura F."/>
            <person name="Kuhara S."/>
            <person name="Hattori M."/>
            <person name="Hayashi T."/>
            <person name="Nakayama K."/>
        </authorList>
    </citation>
    <scope>NUCLEOTIDE SEQUENCE [LARGE SCALE GENOMIC DNA]</scope>
    <source>
        <strain>ATCC 33277 / DSM 20709 / CIP 103683 / JCM 12257 / NCTC 11834 / 2561</strain>
    </source>
</reference>
<dbReference type="EMBL" id="AP009380">
    <property type="protein sequence ID" value="BAG34122.1"/>
    <property type="molecule type" value="Genomic_DNA"/>
</dbReference>
<dbReference type="RefSeq" id="WP_004584887.1">
    <property type="nucleotide sequence ID" value="NZ_CP025930.1"/>
</dbReference>
<dbReference type="SMR" id="B2RL77"/>
<dbReference type="GeneID" id="29256777"/>
<dbReference type="KEGG" id="pgn:PGN_1603"/>
<dbReference type="eggNOG" id="COG1781">
    <property type="taxonomic scope" value="Bacteria"/>
</dbReference>
<dbReference type="HOGENOM" id="CLU_128576_0_0_10"/>
<dbReference type="OrthoDB" id="5599321at2"/>
<dbReference type="BioCyc" id="PGIN431947:G1G2V-1804-MONOMER"/>
<dbReference type="Proteomes" id="UP000008842">
    <property type="component" value="Chromosome"/>
</dbReference>
<dbReference type="GO" id="GO:0009347">
    <property type="term" value="C:aspartate carbamoyltransferase complex"/>
    <property type="evidence" value="ECO:0007669"/>
    <property type="project" value="InterPro"/>
</dbReference>
<dbReference type="GO" id="GO:0046872">
    <property type="term" value="F:metal ion binding"/>
    <property type="evidence" value="ECO:0007669"/>
    <property type="project" value="UniProtKB-KW"/>
</dbReference>
<dbReference type="GO" id="GO:0006207">
    <property type="term" value="P:'de novo' pyrimidine nucleobase biosynthetic process"/>
    <property type="evidence" value="ECO:0007669"/>
    <property type="project" value="InterPro"/>
</dbReference>
<dbReference type="GO" id="GO:0006221">
    <property type="term" value="P:pyrimidine nucleotide biosynthetic process"/>
    <property type="evidence" value="ECO:0007669"/>
    <property type="project" value="UniProtKB-UniRule"/>
</dbReference>
<dbReference type="Gene3D" id="2.30.30.20">
    <property type="entry name" value="Aspartate carbamoyltransferase regulatory subunit, C-terminal domain"/>
    <property type="match status" value="1"/>
</dbReference>
<dbReference type="Gene3D" id="3.30.70.140">
    <property type="entry name" value="Aspartate carbamoyltransferase regulatory subunit, N-terminal domain"/>
    <property type="match status" value="1"/>
</dbReference>
<dbReference type="HAMAP" id="MF_00002">
    <property type="entry name" value="Asp_carb_tr_reg"/>
    <property type="match status" value="1"/>
</dbReference>
<dbReference type="InterPro" id="IPR020545">
    <property type="entry name" value="Asp_carbamoyltransf_reg_N"/>
</dbReference>
<dbReference type="InterPro" id="IPR002801">
    <property type="entry name" value="Asp_carbamoylTrfase_reg"/>
</dbReference>
<dbReference type="InterPro" id="IPR020542">
    <property type="entry name" value="Asp_carbamoyltrfase_reg_C"/>
</dbReference>
<dbReference type="InterPro" id="IPR036792">
    <property type="entry name" value="Asp_carbatrfase_reg_C_sf"/>
</dbReference>
<dbReference type="InterPro" id="IPR036793">
    <property type="entry name" value="Asp_carbatrfase_reg_N_sf"/>
</dbReference>
<dbReference type="NCBIfam" id="TIGR00240">
    <property type="entry name" value="ATCase_reg"/>
    <property type="match status" value="1"/>
</dbReference>
<dbReference type="PANTHER" id="PTHR35805">
    <property type="entry name" value="ASPARTATE CARBAMOYLTRANSFERASE REGULATORY CHAIN"/>
    <property type="match status" value="1"/>
</dbReference>
<dbReference type="PANTHER" id="PTHR35805:SF1">
    <property type="entry name" value="ASPARTATE CARBAMOYLTRANSFERASE REGULATORY CHAIN"/>
    <property type="match status" value="1"/>
</dbReference>
<dbReference type="Pfam" id="PF01948">
    <property type="entry name" value="PyrI"/>
    <property type="match status" value="1"/>
</dbReference>
<dbReference type="Pfam" id="PF02748">
    <property type="entry name" value="PyrI_C"/>
    <property type="match status" value="1"/>
</dbReference>
<dbReference type="SUPFAM" id="SSF57825">
    <property type="entry name" value="Aspartate carbamoyltransferase, Regulatory-chain, C-terminal domain"/>
    <property type="match status" value="1"/>
</dbReference>
<dbReference type="SUPFAM" id="SSF54893">
    <property type="entry name" value="Aspartate carbamoyltransferase, Regulatory-chain, N-terminal domain"/>
    <property type="match status" value="1"/>
</dbReference>
<sequence>MKKEEMLVAAIRNGIVIDHIPPTKLFKVATLLQLDDLDKRITIGNNLRSRSHGSKGVIKIEDKTFEEEELNRIALIAPNVRLNIIRDYEVVEKRQVEVPHEIVGLVRCPNPKCITNNEPMQTRFRVIDAEQCTLRCDYCERKLAGDRIELL</sequence>
<accession>B2RL77</accession>
<feature type="chain" id="PRO_1000088831" description="Aspartate carbamoyltransferase regulatory chain">
    <location>
        <begin position="1"/>
        <end position="151"/>
    </location>
</feature>
<feature type="binding site" evidence="1">
    <location>
        <position position="108"/>
    </location>
    <ligand>
        <name>Zn(2+)</name>
        <dbReference type="ChEBI" id="CHEBI:29105"/>
    </ligand>
</feature>
<feature type="binding site" evidence="1">
    <location>
        <position position="113"/>
    </location>
    <ligand>
        <name>Zn(2+)</name>
        <dbReference type="ChEBI" id="CHEBI:29105"/>
    </ligand>
</feature>
<feature type="binding site" evidence="1">
    <location>
        <position position="136"/>
    </location>
    <ligand>
        <name>Zn(2+)</name>
        <dbReference type="ChEBI" id="CHEBI:29105"/>
    </ligand>
</feature>
<feature type="binding site" evidence="1">
    <location>
        <position position="139"/>
    </location>
    <ligand>
        <name>Zn(2+)</name>
        <dbReference type="ChEBI" id="CHEBI:29105"/>
    </ligand>
</feature>
<name>PYRI_PORG3</name>